<organism>
    <name type="scientific">Escherichia coli O8 (strain IAI1)</name>
    <dbReference type="NCBI Taxonomy" id="585034"/>
    <lineage>
        <taxon>Bacteria</taxon>
        <taxon>Pseudomonadati</taxon>
        <taxon>Pseudomonadota</taxon>
        <taxon>Gammaproteobacteria</taxon>
        <taxon>Enterobacterales</taxon>
        <taxon>Enterobacteriaceae</taxon>
        <taxon>Escherichia</taxon>
    </lineage>
</organism>
<name>NADD_ECO8A</name>
<keyword id="KW-0067">ATP-binding</keyword>
<keyword id="KW-0520">NAD</keyword>
<keyword id="KW-0547">Nucleotide-binding</keyword>
<keyword id="KW-0548">Nucleotidyltransferase</keyword>
<keyword id="KW-0662">Pyridine nucleotide biosynthesis</keyword>
<keyword id="KW-0808">Transferase</keyword>
<sequence length="213" mass="24528">MKSLQALFGGTFDPVHYGHLKPVETLANLIGLTRVTIIPNNVPPHRPQPEANSVQRKHMLELAIADKPLFTLDERELKRNAPSYTAQTLKEWRQEQGPDVPLAFIIGQDSLLTFPTWYEYETILDNAHLIVCRRPGYPLEMAQPQYQQWLEDHLTHNPEDLHLQPAGKIYLAETPWFNISATIIRERLQNGESCEDLLPEPVLTYINQQGLYR</sequence>
<evidence type="ECO:0000255" key="1">
    <source>
        <dbReference type="HAMAP-Rule" id="MF_00244"/>
    </source>
</evidence>
<dbReference type="EC" id="2.7.7.18" evidence="1"/>
<dbReference type="EMBL" id="CU928160">
    <property type="protein sequence ID" value="CAQ97493.1"/>
    <property type="molecule type" value="Genomic_DNA"/>
</dbReference>
<dbReference type="RefSeq" id="WP_000838889.1">
    <property type="nucleotide sequence ID" value="NC_011741.1"/>
</dbReference>
<dbReference type="SMR" id="B7M5G6"/>
<dbReference type="GeneID" id="93776843"/>
<dbReference type="KEGG" id="ecr:ECIAI1_0623"/>
<dbReference type="HOGENOM" id="CLU_069765_0_0_6"/>
<dbReference type="UniPathway" id="UPA00253">
    <property type="reaction ID" value="UER00332"/>
</dbReference>
<dbReference type="GO" id="GO:0005524">
    <property type="term" value="F:ATP binding"/>
    <property type="evidence" value="ECO:0007669"/>
    <property type="project" value="UniProtKB-KW"/>
</dbReference>
<dbReference type="GO" id="GO:0004515">
    <property type="term" value="F:nicotinate-nucleotide adenylyltransferase activity"/>
    <property type="evidence" value="ECO:0007669"/>
    <property type="project" value="UniProtKB-UniRule"/>
</dbReference>
<dbReference type="GO" id="GO:0009435">
    <property type="term" value="P:NAD biosynthetic process"/>
    <property type="evidence" value="ECO:0007669"/>
    <property type="project" value="UniProtKB-UniRule"/>
</dbReference>
<dbReference type="CDD" id="cd02165">
    <property type="entry name" value="NMNAT"/>
    <property type="match status" value="1"/>
</dbReference>
<dbReference type="FunFam" id="3.40.50.620:FF:000039">
    <property type="entry name" value="Probable nicotinate-nucleotide adenylyltransferase"/>
    <property type="match status" value="1"/>
</dbReference>
<dbReference type="Gene3D" id="3.40.50.620">
    <property type="entry name" value="HUPs"/>
    <property type="match status" value="1"/>
</dbReference>
<dbReference type="HAMAP" id="MF_00244">
    <property type="entry name" value="NaMN_adenylyltr"/>
    <property type="match status" value="1"/>
</dbReference>
<dbReference type="InterPro" id="IPR004821">
    <property type="entry name" value="Cyt_trans-like"/>
</dbReference>
<dbReference type="InterPro" id="IPR005248">
    <property type="entry name" value="NadD/NMNAT"/>
</dbReference>
<dbReference type="InterPro" id="IPR014729">
    <property type="entry name" value="Rossmann-like_a/b/a_fold"/>
</dbReference>
<dbReference type="NCBIfam" id="TIGR00125">
    <property type="entry name" value="cyt_tran_rel"/>
    <property type="match status" value="1"/>
</dbReference>
<dbReference type="NCBIfam" id="TIGR00482">
    <property type="entry name" value="nicotinate (nicotinamide) nucleotide adenylyltransferase"/>
    <property type="match status" value="1"/>
</dbReference>
<dbReference type="NCBIfam" id="NF000839">
    <property type="entry name" value="PRK00071.1-1"/>
    <property type="match status" value="1"/>
</dbReference>
<dbReference type="NCBIfam" id="NF000840">
    <property type="entry name" value="PRK00071.1-3"/>
    <property type="match status" value="1"/>
</dbReference>
<dbReference type="PANTHER" id="PTHR39321">
    <property type="entry name" value="NICOTINATE-NUCLEOTIDE ADENYLYLTRANSFERASE-RELATED"/>
    <property type="match status" value="1"/>
</dbReference>
<dbReference type="PANTHER" id="PTHR39321:SF3">
    <property type="entry name" value="PHOSPHOPANTETHEINE ADENYLYLTRANSFERASE"/>
    <property type="match status" value="1"/>
</dbReference>
<dbReference type="Pfam" id="PF01467">
    <property type="entry name" value="CTP_transf_like"/>
    <property type="match status" value="1"/>
</dbReference>
<dbReference type="SUPFAM" id="SSF52374">
    <property type="entry name" value="Nucleotidylyl transferase"/>
    <property type="match status" value="1"/>
</dbReference>
<feature type="chain" id="PRO_1000192237" description="Probable nicotinate-nucleotide adenylyltransferase">
    <location>
        <begin position="1"/>
        <end position="213"/>
    </location>
</feature>
<reference key="1">
    <citation type="journal article" date="2009" name="PLoS Genet.">
        <title>Organised genome dynamics in the Escherichia coli species results in highly diverse adaptive paths.</title>
        <authorList>
            <person name="Touchon M."/>
            <person name="Hoede C."/>
            <person name="Tenaillon O."/>
            <person name="Barbe V."/>
            <person name="Baeriswyl S."/>
            <person name="Bidet P."/>
            <person name="Bingen E."/>
            <person name="Bonacorsi S."/>
            <person name="Bouchier C."/>
            <person name="Bouvet O."/>
            <person name="Calteau A."/>
            <person name="Chiapello H."/>
            <person name="Clermont O."/>
            <person name="Cruveiller S."/>
            <person name="Danchin A."/>
            <person name="Diard M."/>
            <person name="Dossat C."/>
            <person name="Karoui M.E."/>
            <person name="Frapy E."/>
            <person name="Garry L."/>
            <person name="Ghigo J.M."/>
            <person name="Gilles A.M."/>
            <person name="Johnson J."/>
            <person name="Le Bouguenec C."/>
            <person name="Lescat M."/>
            <person name="Mangenot S."/>
            <person name="Martinez-Jehanne V."/>
            <person name="Matic I."/>
            <person name="Nassif X."/>
            <person name="Oztas S."/>
            <person name="Petit M.A."/>
            <person name="Pichon C."/>
            <person name="Rouy Z."/>
            <person name="Ruf C.S."/>
            <person name="Schneider D."/>
            <person name="Tourret J."/>
            <person name="Vacherie B."/>
            <person name="Vallenet D."/>
            <person name="Medigue C."/>
            <person name="Rocha E.P.C."/>
            <person name="Denamur E."/>
        </authorList>
    </citation>
    <scope>NUCLEOTIDE SEQUENCE [LARGE SCALE GENOMIC DNA]</scope>
    <source>
        <strain>IAI1</strain>
    </source>
</reference>
<comment type="function">
    <text evidence="1">Catalyzes the reversible adenylation of nicotinate mononucleotide (NaMN) to nicotinic acid adenine dinucleotide (NaAD).</text>
</comment>
<comment type="catalytic activity">
    <reaction evidence="1">
        <text>nicotinate beta-D-ribonucleotide + ATP + H(+) = deamido-NAD(+) + diphosphate</text>
        <dbReference type="Rhea" id="RHEA:22860"/>
        <dbReference type="ChEBI" id="CHEBI:15378"/>
        <dbReference type="ChEBI" id="CHEBI:30616"/>
        <dbReference type="ChEBI" id="CHEBI:33019"/>
        <dbReference type="ChEBI" id="CHEBI:57502"/>
        <dbReference type="ChEBI" id="CHEBI:58437"/>
        <dbReference type="EC" id="2.7.7.18"/>
    </reaction>
</comment>
<comment type="pathway">
    <text evidence="1">Cofactor biosynthesis; NAD(+) biosynthesis; deamido-NAD(+) from nicotinate D-ribonucleotide: step 1/1.</text>
</comment>
<comment type="similarity">
    <text evidence="1">Belongs to the NadD family.</text>
</comment>
<proteinExistence type="inferred from homology"/>
<gene>
    <name evidence="1" type="primary">nadD</name>
    <name type="ordered locus">ECIAI1_0623</name>
</gene>
<accession>B7M5G6</accession>
<protein>
    <recommendedName>
        <fullName evidence="1">Probable nicotinate-nucleotide adenylyltransferase</fullName>
        <ecNumber evidence="1">2.7.7.18</ecNumber>
    </recommendedName>
    <alternativeName>
        <fullName evidence="1">Deamido-NAD(+) diphosphorylase</fullName>
    </alternativeName>
    <alternativeName>
        <fullName evidence="1">Deamido-NAD(+) pyrophosphorylase</fullName>
    </alternativeName>
    <alternativeName>
        <fullName evidence="1">Nicotinate mononucleotide adenylyltransferase</fullName>
        <shortName evidence="1">NaMN adenylyltransferase</shortName>
    </alternativeName>
</protein>